<gene>
    <name type="primary">flhB</name>
    <name type="ordered locus">STM1914</name>
</gene>
<sequence>MAEESDDDKTEAPTPHRLEKAREEGQIPRSRELTSLLILLVGVCIIWFGGESLARQLAGMLSAGLHFDHRMVNDPNLILGQIILLIKAAMMALLPLIAGVVLVALISPVMLGGLIFSGKSLQPKFSKLNPLPGIKRMFSAQTGAELLKAVLKSTLVGCVTGFYLWHHWPQMMRLMAESPIVAMGNALDLVGLCALLVVLGVIPMVGFDVFFQIFSHLKKLRMSRQDIRDEFKESEGDPHVKGKIRQMQRAAAQRRMMEDVPKADVIVTNPTHYSVALQYDENKMSAPKVVAKGAGLIALRIREIGAEHRVPTLEAPPLARALYRHAEIGQQIPGQLYAAVAEVLAWVWQLKRWRLAGGQRPPQPENLPVPEALDFMNEKNTDG</sequence>
<organism>
    <name type="scientific">Salmonella typhimurium (strain LT2 / SGSC1412 / ATCC 700720)</name>
    <dbReference type="NCBI Taxonomy" id="99287"/>
    <lineage>
        <taxon>Bacteria</taxon>
        <taxon>Pseudomonadati</taxon>
        <taxon>Pseudomonadota</taxon>
        <taxon>Gammaproteobacteria</taxon>
        <taxon>Enterobacterales</taxon>
        <taxon>Enterobacteriaceae</taxon>
        <taxon>Salmonella</taxon>
    </lineage>
</organism>
<protein>
    <recommendedName>
        <fullName>Flagellar biosynthetic protein FlhB</fullName>
    </recommendedName>
</protein>
<dbReference type="EMBL" id="D32203">
    <property type="protein sequence ID" value="BAA06902.1"/>
    <property type="molecule type" value="Genomic_DNA"/>
</dbReference>
<dbReference type="EMBL" id="AE006468">
    <property type="protein sequence ID" value="AAL20830.1"/>
    <property type="molecule type" value="Genomic_DNA"/>
</dbReference>
<dbReference type="EMBL" id="M16691">
    <property type="protein sequence ID" value="AAD15121.1"/>
    <property type="molecule type" value="Genomic_DNA"/>
</dbReference>
<dbReference type="PIR" id="A55546">
    <property type="entry name" value="A55546"/>
</dbReference>
<dbReference type="RefSeq" id="NP_460871.1">
    <property type="nucleotide sequence ID" value="NC_003197.2"/>
</dbReference>
<dbReference type="RefSeq" id="WP_000797081.1">
    <property type="nucleotide sequence ID" value="NC_003197.2"/>
</dbReference>
<dbReference type="PDB" id="3B0Z">
    <property type="method" value="X-ray"/>
    <property type="resolution" value="2.45 A"/>
    <property type="chains" value="A=219-269, B=270-383"/>
</dbReference>
<dbReference type="PDBsum" id="3B0Z"/>
<dbReference type="SMR" id="P40727"/>
<dbReference type="IntAct" id="P40727">
    <property type="interactions" value="1"/>
</dbReference>
<dbReference type="STRING" id="99287.STM1914"/>
<dbReference type="TCDB" id="3.A.6.2.1">
    <property type="family name" value="the type iii (virulence-related) secretory pathway (iiisp) family"/>
</dbReference>
<dbReference type="PaxDb" id="99287-STM1914"/>
<dbReference type="GeneID" id="1253435"/>
<dbReference type="KEGG" id="stm:STM1914"/>
<dbReference type="PATRIC" id="fig|99287.12.peg.2030"/>
<dbReference type="HOGENOM" id="CLU_041013_1_2_6"/>
<dbReference type="OMA" id="IRMSKQD"/>
<dbReference type="PhylomeDB" id="P40727"/>
<dbReference type="BioCyc" id="SENT99287:STM1914-MONOMER"/>
<dbReference type="EvolutionaryTrace" id="P40727"/>
<dbReference type="Proteomes" id="UP000001014">
    <property type="component" value="Chromosome"/>
</dbReference>
<dbReference type="GO" id="GO:0005886">
    <property type="term" value="C:plasma membrane"/>
    <property type="evidence" value="ECO:0000318"/>
    <property type="project" value="GO_Central"/>
</dbReference>
<dbReference type="GO" id="GO:0044780">
    <property type="term" value="P:bacterial-type flagellum assembly"/>
    <property type="evidence" value="ECO:0007669"/>
    <property type="project" value="InterPro"/>
</dbReference>
<dbReference type="GO" id="GO:0009306">
    <property type="term" value="P:protein secretion"/>
    <property type="evidence" value="ECO:0007669"/>
    <property type="project" value="InterPro"/>
</dbReference>
<dbReference type="FunFam" id="3.40.1690.10:FF:000001">
    <property type="entry name" value="Flagellar biosynthetic protein FlhB"/>
    <property type="match status" value="1"/>
</dbReference>
<dbReference type="Gene3D" id="6.10.250.2080">
    <property type="match status" value="1"/>
</dbReference>
<dbReference type="Gene3D" id="3.40.1690.10">
    <property type="entry name" value="secretion proteins EscU"/>
    <property type="match status" value="1"/>
</dbReference>
<dbReference type="InterPro" id="IPR006136">
    <property type="entry name" value="FlhB"/>
</dbReference>
<dbReference type="InterPro" id="IPR006135">
    <property type="entry name" value="T3SS_substrate_exporter"/>
</dbReference>
<dbReference type="InterPro" id="IPR029025">
    <property type="entry name" value="T3SS_substrate_exporter_C"/>
</dbReference>
<dbReference type="NCBIfam" id="TIGR00328">
    <property type="entry name" value="flhB"/>
    <property type="match status" value="1"/>
</dbReference>
<dbReference type="PANTHER" id="PTHR30531">
    <property type="entry name" value="FLAGELLAR BIOSYNTHETIC PROTEIN FLHB"/>
    <property type="match status" value="1"/>
</dbReference>
<dbReference type="PANTHER" id="PTHR30531:SF12">
    <property type="entry name" value="FLAGELLAR BIOSYNTHETIC PROTEIN FLHB"/>
    <property type="match status" value="1"/>
</dbReference>
<dbReference type="Pfam" id="PF01312">
    <property type="entry name" value="Bac_export_2"/>
    <property type="match status" value="1"/>
</dbReference>
<dbReference type="PRINTS" id="PR00950">
    <property type="entry name" value="TYPE3IMSPROT"/>
</dbReference>
<dbReference type="SUPFAM" id="SSF160544">
    <property type="entry name" value="EscU C-terminal domain-like"/>
    <property type="match status" value="1"/>
</dbReference>
<accession>P40727</accession>
<accession>Q6LDV3</accession>
<proteinExistence type="evidence at protein level"/>
<name>FLHB_SALTY</name>
<reference key="1">
    <citation type="journal article" date="1994" name="J. Bacteriol.">
        <title>Molecular characterization of the Salmonella typhimurium flhB operon and its protein products.</title>
        <authorList>
            <person name="Minamino T."/>
            <person name="Iino T."/>
            <person name="Kutsukake K."/>
        </authorList>
    </citation>
    <scope>NUCLEOTIDE SEQUENCE [GENOMIC DNA]</scope>
    <source>
        <strain>KK1004</strain>
    </source>
</reference>
<reference key="2">
    <citation type="journal article" date="2001" name="Nature">
        <title>Complete genome sequence of Salmonella enterica serovar Typhimurium LT2.</title>
        <authorList>
            <person name="McClelland M."/>
            <person name="Sanderson K.E."/>
            <person name="Spieth J."/>
            <person name="Clifton S.W."/>
            <person name="Latreille P."/>
            <person name="Courtney L."/>
            <person name="Porwollik S."/>
            <person name="Ali J."/>
            <person name="Dante M."/>
            <person name="Du F."/>
            <person name="Hou S."/>
            <person name="Layman D."/>
            <person name="Leonard S."/>
            <person name="Nguyen C."/>
            <person name="Scott K."/>
            <person name="Holmes A."/>
            <person name="Grewal N."/>
            <person name="Mulvaney E."/>
            <person name="Ryan E."/>
            <person name="Sun H."/>
            <person name="Florea L."/>
            <person name="Miller W."/>
            <person name="Stoneking T."/>
            <person name="Nhan M."/>
            <person name="Waterston R."/>
            <person name="Wilson R.K."/>
        </authorList>
    </citation>
    <scope>NUCLEOTIDE SEQUENCE [LARGE SCALE GENOMIC DNA]</scope>
    <source>
        <strain>LT2 / SGSC1412 / ATCC 700720</strain>
    </source>
</reference>
<reference key="3">
    <citation type="journal article" date="1987" name="J. Bacteriol.">
        <title>Purification and characterization of the CheZ protein of bacterial chemotaxis.</title>
        <authorList>
            <person name="Stock A.M."/>
            <person name="Stock J.B."/>
        </authorList>
    </citation>
    <scope>NUCLEOTIDE SEQUENCE [GENOMIC DNA] OF 1-213</scope>
</reference>
<keyword id="KW-0002">3D-structure</keyword>
<keyword id="KW-1005">Bacterial flagellum biogenesis</keyword>
<keyword id="KW-1006">Bacterial flagellum protein export</keyword>
<keyword id="KW-0997">Cell inner membrane</keyword>
<keyword id="KW-1003">Cell membrane</keyword>
<keyword id="KW-0472">Membrane</keyword>
<keyword id="KW-0653">Protein transport</keyword>
<keyword id="KW-1185">Reference proteome</keyword>
<keyword id="KW-0812">Transmembrane</keyword>
<keyword id="KW-1133">Transmembrane helix</keyword>
<keyword id="KW-0813">Transport</keyword>
<comment type="function">
    <text>Required for formation of the rod structure in the basal body of the flagellar apparatus. Together with FliI and FliH, may constitute the export apparatus of flagellin.</text>
</comment>
<comment type="subcellular location">
    <subcellularLocation>
        <location evidence="1">Cell inner membrane</location>
        <topology evidence="1">Multi-pass membrane protein</topology>
    </subcellularLocation>
</comment>
<comment type="similarity">
    <text evidence="4">Belongs to the type III secretion exporter family.</text>
</comment>
<evidence type="ECO:0000250" key="1"/>
<evidence type="ECO:0000255" key="2"/>
<evidence type="ECO:0000256" key="3">
    <source>
        <dbReference type="SAM" id="MobiDB-lite"/>
    </source>
</evidence>
<evidence type="ECO:0000305" key="4"/>
<evidence type="ECO:0007829" key="5">
    <source>
        <dbReference type="PDB" id="3B0Z"/>
    </source>
</evidence>
<feature type="chain" id="PRO_0000180950" description="Flagellar biosynthetic protein FlhB">
    <location>
        <begin position="1"/>
        <end position="383"/>
    </location>
</feature>
<feature type="topological domain" description="Periplasmic" evidence="2">
    <location>
        <begin position="1"/>
        <end position="32"/>
    </location>
</feature>
<feature type="transmembrane region" description="Helical" evidence="2">
    <location>
        <begin position="33"/>
        <end position="53"/>
    </location>
</feature>
<feature type="topological domain" description="Cytoplasmic" evidence="2">
    <location>
        <begin position="54"/>
        <end position="74"/>
    </location>
</feature>
<feature type="transmembrane region" description="Helical" evidence="2">
    <location>
        <begin position="75"/>
        <end position="95"/>
    </location>
</feature>
<feature type="transmembrane region" description="Helical" evidence="2">
    <location>
        <begin position="96"/>
        <end position="116"/>
    </location>
</feature>
<feature type="topological domain" description="Cytoplasmic" evidence="2">
    <location>
        <begin position="117"/>
        <end position="145"/>
    </location>
</feature>
<feature type="transmembrane region" description="Helical" evidence="2">
    <location>
        <begin position="146"/>
        <end position="166"/>
    </location>
</feature>
<feature type="topological domain" description="Periplasmic" evidence="2">
    <location>
        <begin position="167"/>
        <end position="190"/>
    </location>
</feature>
<feature type="transmembrane region" description="Helical" evidence="2">
    <location>
        <begin position="191"/>
        <end position="211"/>
    </location>
</feature>
<feature type="topological domain" description="Cytoplasmic" evidence="2">
    <location>
        <begin position="212"/>
        <end position="383"/>
    </location>
</feature>
<feature type="region of interest" description="Disordered" evidence="3">
    <location>
        <begin position="1"/>
        <end position="26"/>
    </location>
</feature>
<feature type="region of interest" description="Disordered" evidence="3">
    <location>
        <begin position="359"/>
        <end position="383"/>
    </location>
</feature>
<feature type="compositionally biased region" description="Basic and acidic residues" evidence="3">
    <location>
        <begin position="10"/>
        <end position="26"/>
    </location>
</feature>
<feature type="helix" evidence="5">
    <location>
        <begin position="230"/>
        <end position="236"/>
    </location>
</feature>
<feature type="helix" evidence="5">
    <location>
        <begin position="238"/>
        <end position="258"/>
    </location>
</feature>
<feature type="helix" evidence="5">
    <location>
        <begin position="259"/>
        <end position="262"/>
    </location>
</feature>
<feature type="strand" evidence="5">
    <location>
        <begin position="264"/>
        <end position="269"/>
    </location>
</feature>
<feature type="strand" evidence="5">
    <location>
        <begin position="273"/>
        <end position="278"/>
    </location>
</feature>
<feature type="strand" evidence="5">
    <location>
        <begin position="288"/>
        <end position="293"/>
    </location>
</feature>
<feature type="helix" evidence="5">
    <location>
        <begin position="296"/>
        <end position="307"/>
    </location>
</feature>
<feature type="strand" evidence="5">
    <location>
        <begin position="312"/>
        <end position="314"/>
    </location>
</feature>
<feature type="helix" evidence="5">
    <location>
        <begin position="316"/>
        <end position="325"/>
    </location>
</feature>
<feature type="helix" evidence="5">
    <location>
        <begin position="334"/>
        <end position="336"/>
    </location>
</feature>
<feature type="helix" evidence="5">
    <location>
        <begin position="337"/>
        <end position="350"/>
    </location>
</feature>